<keyword id="KW-1185">Reference proteome</keyword>
<evidence type="ECO:0000305" key="1"/>
<name>Y8I5_ENCCU</name>
<reference key="1">
    <citation type="journal article" date="2001" name="Nature">
        <title>Genome sequence and gene compaction of the eukaryote parasite Encephalitozoon cuniculi.</title>
        <authorList>
            <person name="Katinka M.D."/>
            <person name="Duprat S."/>
            <person name="Cornillot E."/>
            <person name="Metenier G."/>
            <person name="Thomarat F."/>
            <person name="Prensier G."/>
            <person name="Barbe V."/>
            <person name="Peyretaillade E."/>
            <person name="Brottier P."/>
            <person name="Wincker P."/>
            <person name="Delbac F."/>
            <person name="El Alaoui H."/>
            <person name="Peyret P."/>
            <person name="Saurin W."/>
            <person name="Gouy M."/>
            <person name="Weissenbach J."/>
            <person name="Vivares C.P."/>
        </authorList>
    </citation>
    <scope>NUCLEOTIDE SEQUENCE [LARGE SCALE GENOMIC DNA]</scope>
    <source>
        <strain>GB-M1</strain>
    </source>
</reference>
<organism>
    <name type="scientific">Encephalitozoon cuniculi (strain GB-M1)</name>
    <name type="common">Microsporidian parasite</name>
    <dbReference type="NCBI Taxonomy" id="284813"/>
    <lineage>
        <taxon>Eukaryota</taxon>
        <taxon>Fungi</taxon>
        <taxon>Fungi incertae sedis</taxon>
        <taxon>Microsporidia</taxon>
        <taxon>Unikaryonidae</taxon>
        <taxon>Encephalitozoon</taxon>
    </lineage>
</organism>
<comment type="similarity">
    <text evidence="1">Belongs to the UPF0328 family.</text>
</comment>
<proteinExistence type="inferred from homology"/>
<gene>
    <name type="ordered locus">ECU10_1850</name>
</gene>
<sequence length="268" mass="30517">MNTTHIPEPHRTEQHTENLQHWRKILDIAPIVSIVFPAIMYFIFTKDSFEDSLFLRFITLLLPFSYSAVQYAVLLHTNWKSHNKPEGILHTTLYYTLNLLFLAFSIISILSITTLPINKWKNDGGPILFSIFLPPLFMSPTYLLSTSCCLVPGQIGFTDTGINILIDILTLLCSVRSLLLILEESEYCYCFAAISSILILIRLLREKHGPSEKSALPTVPWRVSILVLILIFAALIYLFMMWVSIDILSDHFDLLTKARSTPVSEPGQ</sequence>
<dbReference type="EMBL" id="AL590449">
    <property type="protein sequence ID" value="CAD25906.1"/>
    <property type="molecule type" value="Genomic_DNA"/>
</dbReference>
<dbReference type="RefSeq" id="NP_586302.1">
    <property type="nucleotide sequence ID" value="NM_001042135.1"/>
</dbReference>
<dbReference type="GeneID" id="859953"/>
<dbReference type="KEGG" id="ecu:ECU10_1850"/>
<dbReference type="VEuPathDB" id="MicrosporidiaDB:ECU10_1850"/>
<dbReference type="HOGENOM" id="CLU_059413_0_0_1"/>
<dbReference type="InParanoid" id="Q8SU92"/>
<dbReference type="Proteomes" id="UP000000819">
    <property type="component" value="Chromosome X"/>
</dbReference>
<dbReference type="InterPro" id="IPR019081">
    <property type="entry name" value="UPF0328"/>
</dbReference>
<dbReference type="Pfam" id="PF09591">
    <property type="entry name" value="DUF2463"/>
    <property type="match status" value="1"/>
</dbReference>
<feature type="chain" id="PRO_0000223138" description="UPF0328 protein ECU10_1850">
    <location>
        <begin position="1"/>
        <end position="268"/>
    </location>
</feature>
<accession>Q8SU92</accession>
<protein>
    <recommendedName>
        <fullName>UPF0328 protein ECU10_1850</fullName>
    </recommendedName>
</protein>